<organism>
    <name type="scientific">Escherichia coli O7:K1 (strain IAI39 / ExPEC)</name>
    <dbReference type="NCBI Taxonomy" id="585057"/>
    <lineage>
        <taxon>Bacteria</taxon>
        <taxon>Pseudomonadati</taxon>
        <taxon>Pseudomonadota</taxon>
        <taxon>Gammaproteobacteria</taxon>
        <taxon>Enterobacterales</taxon>
        <taxon>Enterobacteriaceae</taxon>
        <taxon>Escherichia</taxon>
    </lineage>
</organism>
<proteinExistence type="inferred from homology"/>
<feature type="chain" id="PRO_1000197194" description="Glycine--tRNA ligase alpha subunit">
    <location>
        <begin position="1"/>
        <end position="303"/>
    </location>
</feature>
<accession>B7NP56</accession>
<comment type="catalytic activity">
    <reaction evidence="1">
        <text>tRNA(Gly) + glycine + ATP = glycyl-tRNA(Gly) + AMP + diphosphate</text>
        <dbReference type="Rhea" id="RHEA:16013"/>
        <dbReference type="Rhea" id="RHEA-COMP:9664"/>
        <dbReference type="Rhea" id="RHEA-COMP:9683"/>
        <dbReference type="ChEBI" id="CHEBI:30616"/>
        <dbReference type="ChEBI" id="CHEBI:33019"/>
        <dbReference type="ChEBI" id="CHEBI:57305"/>
        <dbReference type="ChEBI" id="CHEBI:78442"/>
        <dbReference type="ChEBI" id="CHEBI:78522"/>
        <dbReference type="ChEBI" id="CHEBI:456215"/>
        <dbReference type="EC" id="6.1.1.14"/>
    </reaction>
</comment>
<comment type="subunit">
    <text evidence="1">Tetramer of two alpha and two beta subunits.</text>
</comment>
<comment type="subcellular location">
    <subcellularLocation>
        <location evidence="1">Cytoplasm</location>
    </subcellularLocation>
</comment>
<comment type="similarity">
    <text evidence="1">Belongs to the class-II aminoacyl-tRNA synthetase family.</text>
</comment>
<gene>
    <name evidence="1" type="primary">glyQ</name>
    <name type="ordered locus">ECIAI39_4068</name>
</gene>
<sequence length="303" mass="34716">MQKFDTRTFQGLILTLQDYWARQGCTIVQPLDMEVGAGTSHPMTCLRALGPEPMAAAYVQPSRRPTDGRYGENPNRLQHYYQFQVVIKPSPDNIQELYLGSLKELGMDPTIHDIRFVEDNWENPTLGAWGLGWEVWLNGMEVTQFTYFQQVGGLECKPVTGEITYGLERLAMYIQGVDSVYDLVWSDGPLGKTTYGDVFHQNEVEQSTYNFEYADVDFLFTCFEQYEKEAQQLLALENPLPLPAYERILKAAHSFNLLDARKAISVTERQRYILRIRTLTKAVAEAYYASREALGFPMCNKDK</sequence>
<keyword id="KW-0030">Aminoacyl-tRNA synthetase</keyword>
<keyword id="KW-0067">ATP-binding</keyword>
<keyword id="KW-0963">Cytoplasm</keyword>
<keyword id="KW-0436">Ligase</keyword>
<keyword id="KW-0547">Nucleotide-binding</keyword>
<keyword id="KW-0648">Protein biosynthesis</keyword>
<dbReference type="EC" id="6.1.1.14" evidence="1"/>
<dbReference type="EMBL" id="CU928164">
    <property type="protein sequence ID" value="CAR20176.1"/>
    <property type="molecule type" value="Genomic_DNA"/>
</dbReference>
<dbReference type="RefSeq" id="WP_001168544.1">
    <property type="nucleotide sequence ID" value="NC_011750.1"/>
</dbReference>
<dbReference type="RefSeq" id="YP_002409954.1">
    <property type="nucleotide sequence ID" value="NC_011750.1"/>
</dbReference>
<dbReference type="SMR" id="B7NP56"/>
<dbReference type="STRING" id="585057.ECIAI39_4068"/>
<dbReference type="GeneID" id="93778290"/>
<dbReference type="KEGG" id="ect:ECIAI39_4068"/>
<dbReference type="PATRIC" id="fig|585057.6.peg.4217"/>
<dbReference type="HOGENOM" id="CLU_057066_1_0_6"/>
<dbReference type="Proteomes" id="UP000000749">
    <property type="component" value="Chromosome"/>
</dbReference>
<dbReference type="GO" id="GO:0005829">
    <property type="term" value="C:cytosol"/>
    <property type="evidence" value="ECO:0007669"/>
    <property type="project" value="TreeGrafter"/>
</dbReference>
<dbReference type="GO" id="GO:0005524">
    <property type="term" value="F:ATP binding"/>
    <property type="evidence" value="ECO:0007669"/>
    <property type="project" value="UniProtKB-UniRule"/>
</dbReference>
<dbReference type="GO" id="GO:0004820">
    <property type="term" value="F:glycine-tRNA ligase activity"/>
    <property type="evidence" value="ECO:0007669"/>
    <property type="project" value="UniProtKB-UniRule"/>
</dbReference>
<dbReference type="GO" id="GO:0006426">
    <property type="term" value="P:glycyl-tRNA aminoacylation"/>
    <property type="evidence" value="ECO:0007669"/>
    <property type="project" value="UniProtKB-UniRule"/>
</dbReference>
<dbReference type="CDD" id="cd00733">
    <property type="entry name" value="GlyRS_alpha_core"/>
    <property type="match status" value="1"/>
</dbReference>
<dbReference type="FunFam" id="1.20.58.180:FF:000001">
    <property type="entry name" value="Glycine--tRNA ligase alpha subunit"/>
    <property type="match status" value="1"/>
</dbReference>
<dbReference type="FunFam" id="3.30.930.10:FF:000006">
    <property type="entry name" value="Glycine--tRNA ligase alpha subunit"/>
    <property type="match status" value="1"/>
</dbReference>
<dbReference type="Gene3D" id="3.30.930.10">
    <property type="entry name" value="Bira Bifunctional Protein, Domain 2"/>
    <property type="match status" value="1"/>
</dbReference>
<dbReference type="Gene3D" id="1.20.58.180">
    <property type="entry name" value="Class II aaRS and biotin synthetases, domain 2"/>
    <property type="match status" value="1"/>
</dbReference>
<dbReference type="HAMAP" id="MF_00254">
    <property type="entry name" value="Gly_tRNA_synth_alpha"/>
    <property type="match status" value="1"/>
</dbReference>
<dbReference type="InterPro" id="IPR045864">
    <property type="entry name" value="aa-tRNA-synth_II/BPL/LPL"/>
</dbReference>
<dbReference type="InterPro" id="IPR006194">
    <property type="entry name" value="Gly-tRNA-synth_heterodimer"/>
</dbReference>
<dbReference type="InterPro" id="IPR002310">
    <property type="entry name" value="Gly-tRNA_ligase_asu"/>
</dbReference>
<dbReference type="NCBIfam" id="TIGR00388">
    <property type="entry name" value="glyQ"/>
    <property type="match status" value="1"/>
</dbReference>
<dbReference type="NCBIfam" id="NF006827">
    <property type="entry name" value="PRK09348.1"/>
    <property type="match status" value="1"/>
</dbReference>
<dbReference type="PANTHER" id="PTHR30075:SF2">
    <property type="entry name" value="GLYCINE--TRNA LIGASE, CHLOROPLASTIC_MITOCHONDRIAL 2"/>
    <property type="match status" value="1"/>
</dbReference>
<dbReference type="PANTHER" id="PTHR30075">
    <property type="entry name" value="GLYCYL-TRNA SYNTHETASE"/>
    <property type="match status" value="1"/>
</dbReference>
<dbReference type="Pfam" id="PF02091">
    <property type="entry name" value="tRNA-synt_2e"/>
    <property type="match status" value="1"/>
</dbReference>
<dbReference type="PRINTS" id="PR01044">
    <property type="entry name" value="TRNASYNTHGA"/>
</dbReference>
<dbReference type="SUPFAM" id="SSF55681">
    <property type="entry name" value="Class II aaRS and biotin synthetases"/>
    <property type="match status" value="1"/>
</dbReference>
<dbReference type="PROSITE" id="PS50861">
    <property type="entry name" value="AA_TRNA_LIGASE_II_GLYAB"/>
    <property type="match status" value="1"/>
</dbReference>
<evidence type="ECO:0000255" key="1">
    <source>
        <dbReference type="HAMAP-Rule" id="MF_00254"/>
    </source>
</evidence>
<protein>
    <recommendedName>
        <fullName evidence="1">Glycine--tRNA ligase alpha subunit</fullName>
        <ecNumber evidence="1">6.1.1.14</ecNumber>
    </recommendedName>
    <alternativeName>
        <fullName evidence="1">Glycyl-tRNA synthetase alpha subunit</fullName>
        <shortName evidence="1">GlyRS</shortName>
    </alternativeName>
</protein>
<name>SYGA_ECO7I</name>
<reference key="1">
    <citation type="journal article" date="2009" name="PLoS Genet.">
        <title>Organised genome dynamics in the Escherichia coli species results in highly diverse adaptive paths.</title>
        <authorList>
            <person name="Touchon M."/>
            <person name="Hoede C."/>
            <person name="Tenaillon O."/>
            <person name="Barbe V."/>
            <person name="Baeriswyl S."/>
            <person name="Bidet P."/>
            <person name="Bingen E."/>
            <person name="Bonacorsi S."/>
            <person name="Bouchier C."/>
            <person name="Bouvet O."/>
            <person name="Calteau A."/>
            <person name="Chiapello H."/>
            <person name="Clermont O."/>
            <person name="Cruveiller S."/>
            <person name="Danchin A."/>
            <person name="Diard M."/>
            <person name="Dossat C."/>
            <person name="Karoui M.E."/>
            <person name="Frapy E."/>
            <person name="Garry L."/>
            <person name="Ghigo J.M."/>
            <person name="Gilles A.M."/>
            <person name="Johnson J."/>
            <person name="Le Bouguenec C."/>
            <person name="Lescat M."/>
            <person name="Mangenot S."/>
            <person name="Martinez-Jehanne V."/>
            <person name="Matic I."/>
            <person name="Nassif X."/>
            <person name="Oztas S."/>
            <person name="Petit M.A."/>
            <person name="Pichon C."/>
            <person name="Rouy Z."/>
            <person name="Ruf C.S."/>
            <person name="Schneider D."/>
            <person name="Tourret J."/>
            <person name="Vacherie B."/>
            <person name="Vallenet D."/>
            <person name="Medigue C."/>
            <person name="Rocha E.P.C."/>
            <person name="Denamur E."/>
        </authorList>
    </citation>
    <scope>NUCLEOTIDE SEQUENCE [LARGE SCALE GENOMIC DNA]</scope>
    <source>
        <strain>IAI39 / ExPEC</strain>
    </source>
</reference>